<accession>Q50538</accession>
<accession>P72023</accession>
<name>ACDD1_METTE</name>
<keyword id="KW-0903">Direct protein sequencing</keyword>
<keyword id="KW-0484">Methanogenesis</keyword>
<reference key="1">
    <citation type="journal article" date="1996" name="J. Bacteriol.">
        <title>Characterization of the cdhD and cdhE genes encoding subunits of the corrinoid/iron-sulfur enzyme of the CO dehydrogenase complex from Methanosarcina thermophila.</title>
        <authorList>
            <person name="Maupin-Furlow J."/>
            <person name="Ferry J.G."/>
        </authorList>
    </citation>
    <scope>NUCLEOTIDE SEQUENCE [GENOMIC DNA]</scope>
    <scope>PROTEIN SEQUENCE OF 1-26</scope>
    <source>
        <strain>ATCC 43570 / DSM 1825 / OCM 12 / TM-1</strain>
    </source>
</reference>
<reference key="2">
    <citation type="journal article" date="1996" name="J. Bacteriol.">
        <title>Analysis of the CO dehydrogenase/acetyl-Coenzyme A synthase operon of Methanosarcina thermophila.</title>
        <authorList>
            <person name="Maupin-Furlow J.A."/>
            <person name="Ferry J.G."/>
        </authorList>
    </citation>
    <scope>NUCLEOTIDE SEQUENCE [GENOMIC DNA] OF 1-16</scope>
    <source>
        <strain>ATCC 43570 / DSM 1825 / OCM 12 / TM-1</strain>
    </source>
</reference>
<reference key="3">
    <citation type="journal article" date="1996" name="J. Biol. Chem.">
        <title>Partial reactions catalyzed by protein components of the acetyl-CoA decarbonylase synthase enzyme complex from Methanosarcina barkeri.</title>
        <authorList>
            <person name="Grahame D.A."/>
            <person name="DeMoll E."/>
        </authorList>
    </citation>
    <scope>CHARACTERIZATION OF PARTIAL REACTIONS IN THE ACDS COMPLEX</scope>
</reference>
<protein>
    <recommendedName>
        <fullName>Acetyl-CoA decarbonylase/synthase complex subunit delta 1</fullName>
        <shortName>ACDS complex subunit delta 1</shortName>
    </recommendedName>
    <alternativeName>
        <fullName>Corrinoid/iron-sulfur component small subunit 1</fullName>
    </alternativeName>
</protein>
<proteinExistence type="evidence at protein level"/>
<gene>
    <name type="primary">cdhD1</name>
</gene>
<organism>
    <name type="scientific">Methanosarcina thermophila</name>
    <dbReference type="NCBI Taxonomy" id="2210"/>
    <lineage>
        <taxon>Archaea</taxon>
        <taxon>Methanobacteriati</taxon>
        <taxon>Methanobacteriota</taxon>
        <taxon>Stenosarchaea group</taxon>
        <taxon>Methanomicrobia</taxon>
        <taxon>Methanosarcinales</taxon>
        <taxon>Methanosarcinaceae</taxon>
        <taxon>Methanosarcina</taxon>
    </lineage>
</organism>
<sequence length="436" mass="46954">MAKKMKLSDITNMFVGMDVEALEGVTIEGDIEIDLGGLGGGFDPMLAAALGQESAVLAQHFARLAGMFGYPVGFGGAAAPAISPALAAPKLKDLIPAKFDVANIAEWTTEIQEVPIGNTSADGGSRGKRVLVGGEKALPFYFDAPMPNRNQVTIDVFDMRIGLAKAVKENYDEVMDSPGEWAKKNVEKFNADMITIHLISTDPLIKDTPAKEAAKTVEEVLQAVDVPIAIGGSGNPQKDPEVLAKAAEVAEGERCLLASASLNLDYAAIAEAALKYDHDVLSWTQLDMNAQKELNRKLMKQCNVPRDRIIMDPTTAALGYGLDYAYTNMERIRLAALMGDDELTFPMSSGTTNAWGARESWMVGSPLSQDTDWGPREYRGPIWEIVTGLSLAIAGNDLFMMMHPTSVAVLKQITQTLFGSIEAEPVDITNWIGAEV</sequence>
<dbReference type="EMBL" id="U30484">
    <property type="protein sequence ID" value="AAA93167.1"/>
    <property type="molecule type" value="Genomic_DNA"/>
</dbReference>
<dbReference type="EMBL" id="U66032">
    <property type="protein sequence ID" value="AAC44654.1"/>
    <property type="molecule type" value="Genomic_DNA"/>
</dbReference>
<dbReference type="SMR" id="Q50538"/>
<dbReference type="KEGG" id="ag:AAA93167"/>
<dbReference type="BioCyc" id="MetaCyc:CDHDMSARC-MONOMER"/>
<dbReference type="BRENDA" id="2.1.1.245">
    <property type="organism ID" value="3281"/>
</dbReference>
<dbReference type="UniPathway" id="UPA00642"/>
<dbReference type="GO" id="GO:0043885">
    <property type="term" value="F:anaerobic carbon-monoxide dehydrogenase activity"/>
    <property type="evidence" value="ECO:0000314"/>
    <property type="project" value="MENGO"/>
</dbReference>
<dbReference type="GO" id="GO:0019385">
    <property type="term" value="P:methanogenesis, from acetate"/>
    <property type="evidence" value="ECO:0007669"/>
    <property type="project" value="UniProtKB-UniRule"/>
</dbReference>
<dbReference type="GO" id="GO:0006730">
    <property type="term" value="P:one-carbon metabolic process"/>
    <property type="evidence" value="ECO:0007669"/>
    <property type="project" value="InterPro"/>
</dbReference>
<dbReference type="FunFam" id="3.20.20.20:FF:000009">
    <property type="entry name" value="Acetyl-CoA decarbonylase/synthase complex subunit delta"/>
    <property type="match status" value="1"/>
</dbReference>
<dbReference type="Gene3D" id="3.20.20.20">
    <property type="entry name" value="Dihydropteroate synthase-like"/>
    <property type="match status" value="1"/>
</dbReference>
<dbReference type="HAMAP" id="MF_01135">
    <property type="entry name" value="CdhD"/>
    <property type="match status" value="1"/>
</dbReference>
<dbReference type="InterPro" id="IPR016041">
    <property type="entry name" value="Ac-CoA_synth_d_su_TIM-brl"/>
</dbReference>
<dbReference type="InterPro" id="IPR051069">
    <property type="entry name" value="ACDS_complex_subunit"/>
</dbReference>
<dbReference type="InterPro" id="IPR004486">
    <property type="entry name" value="CO_DH/Ac-CoA_synth_dsu"/>
</dbReference>
<dbReference type="InterPro" id="IPR011005">
    <property type="entry name" value="Dihydropteroate_synth-like_sf"/>
</dbReference>
<dbReference type="NCBIfam" id="TIGR00381">
    <property type="entry name" value="cdhD"/>
    <property type="match status" value="1"/>
</dbReference>
<dbReference type="NCBIfam" id="NF003375">
    <property type="entry name" value="PRK04452.1-1"/>
    <property type="match status" value="1"/>
</dbReference>
<dbReference type="NCBIfam" id="NF003376">
    <property type="entry name" value="PRK04452.1-2"/>
    <property type="match status" value="1"/>
</dbReference>
<dbReference type="PANTHER" id="PTHR36214">
    <property type="match status" value="1"/>
</dbReference>
<dbReference type="PANTHER" id="PTHR36214:SF5">
    <property type="entry name" value="ACETYL-COA DECARBONYLASE_SYNTHASE COMPLEX SUBUNIT DELTA"/>
    <property type="match status" value="1"/>
</dbReference>
<dbReference type="Pfam" id="PF03599">
    <property type="entry name" value="CdhD"/>
    <property type="match status" value="1"/>
</dbReference>
<dbReference type="SUPFAM" id="SSF51717">
    <property type="entry name" value="Dihydropteroate synthetase-like"/>
    <property type="match status" value="1"/>
</dbReference>
<evidence type="ECO:0000305" key="1"/>
<comment type="function">
    <text>Part of a complex that catalyzes the reversible cleavage of acetyl-CoA, allowing growth on acetate as sole source of carbon and energy. Probably maintains the overall quaternary structure of the ACDS complex.</text>
</comment>
<comment type="pathway">
    <text>One-carbon metabolism; methanogenesis from acetate.</text>
</comment>
<comment type="subunit">
    <text evidence="1">Heterodimer of delta and gamma chains. The ACDS complex is made up of alpha, epsilon, beta, gamma and delta chains with a probable stoichiometry of (alpha(2)epsilon(2))(4)-beta(8)-(gamma(1)delta(1))(8) (Potential).</text>
</comment>
<comment type="similarity">
    <text evidence="1">Belongs to the CdhD family.</text>
</comment>
<feature type="chain" id="PRO_0000155115" description="Acetyl-CoA decarbonylase/synthase complex subunit delta 1">
    <location>
        <begin position="1"/>
        <end position="436"/>
    </location>
</feature>